<protein>
    <recommendedName>
        <fullName evidence="1">Inner membrane-spanning protein YciB</fullName>
    </recommendedName>
</protein>
<organism>
    <name type="scientific">Erwinia tasmaniensis (strain DSM 17950 / CFBP 7177 / CIP 109463 / NCPPB 4357 / Et1/99)</name>
    <dbReference type="NCBI Taxonomy" id="465817"/>
    <lineage>
        <taxon>Bacteria</taxon>
        <taxon>Pseudomonadati</taxon>
        <taxon>Pseudomonadota</taxon>
        <taxon>Gammaproteobacteria</taxon>
        <taxon>Enterobacterales</taxon>
        <taxon>Erwiniaceae</taxon>
        <taxon>Erwinia</taxon>
    </lineage>
</organism>
<sequence>MKQLLDFLPLVVFFIFYKLYDIFVASGALIVASAIALAVSWLLYRKVEKMALFTFALVAIFGTLTIALHNPDFIKWKVTIIYGLFTLALLFSHWFMQQPLIQKMLGKEIRLPTTAWRRLNIAWALFFLACGLANIYVAFWLSQDTWMNFKVFGLSGLTLLFTLLSGIYIYRLMPQDEK</sequence>
<dbReference type="EMBL" id="CU468135">
    <property type="protein sequence ID" value="CAO96641.1"/>
    <property type="molecule type" value="Genomic_DNA"/>
</dbReference>
<dbReference type="RefSeq" id="WP_012441334.1">
    <property type="nucleotide sequence ID" value="NC_010694.1"/>
</dbReference>
<dbReference type="STRING" id="465817.ETA_15950"/>
<dbReference type="KEGG" id="eta:ETA_15950"/>
<dbReference type="eggNOG" id="COG2917">
    <property type="taxonomic scope" value="Bacteria"/>
</dbReference>
<dbReference type="HOGENOM" id="CLU_089554_2_0_6"/>
<dbReference type="OrthoDB" id="9788219at2"/>
<dbReference type="Proteomes" id="UP000001726">
    <property type="component" value="Chromosome"/>
</dbReference>
<dbReference type="GO" id="GO:0005886">
    <property type="term" value="C:plasma membrane"/>
    <property type="evidence" value="ECO:0007669"/>
    <property type="project" value="UniProtKB-SubCell"/>
</dbReference>
<dbReference type="HAMAP" id="MF_00189">
    <property type="entry name" value="YciB"/>
    <property type="match status" value="1"/>
</dbReference>
<dbReference type="InterPro" id="IPR006008">
    <property type="entry name" value="YciB"/>
</dbReference>
<dbReference type="NCBIfam" id="TIGR00997">
    <property type="entry name" value="ispZ"/>
    <property type="match status" value="1"/>
</dbReference>
<dbReference type="NCBIfam" id="NF001324">
    <property type="entry name" value="PRK00259.1-2"/>
    <property type="match status" value="1"/>
</dbReference>
<dbReference type="NCBIfam" id="NF001325">
    <property type="entry name" value="PRK00259.1-3"/>
    <property type="match status" value="1"/>
</dbReference>
<dbReference type="NCBIfam" id="NF001326">
    <property type="entry name" value="PRK00259.1-4"/>
    <property type="match status" value="1"/>
</dbReference>
<dbReference type="PANTHER" id="PTHR36917:SF1">
    <property type="entry name" value="INNER MEMBRANE-SPANNING PROTEIN YCIB"/>
    <property type="match status" value="1"/>
</dbReference>
<dbReference type="PANTHER" id="PTHR36917">
    <property type="entry name" value="INTRACELLULAR SEPTATION PROTEIN A-RELATED"/>
    <property type="match status" value="1"/>
</dbReference>
<dbReference type="Pfam" id="PF04279">
    <property type="entry name" value="IspA"/>
    <property type="match status" value="1"/>
</dbReference>
<keyword id="KW-0997">Cell inner membrane</keyword>
<keyword id="KW-1003">Cell membrane</keyword>
<keyword id="KW-0472">Membrane</keyword>
<keyword id="KW-1185">Reference proteome</keyword>
<keyword id="KW-0812">Transmembrane</keyword>
<keyword id="KW-1133">Transmembrane helix</keyword>
<reference key="1">
    <citation type="journal article" date="2008" name="Environ. Microbiol.">
        <title>The genome of Erwinia tasmaniensis strain Et1/99, a non-pathogenic bacterium in the genus Erwinia.</title>
        <authorList>
            <person name="Kube M."/>
            <person name="Migdoll A.M."/>
            <person name="Mueller I."/>
            <person name="Kuhl H."/>
            <person name="Beck A."/>
            <person name="Reinhardt R."/>
            <person name="Geider K."/>
        </authorList>
    </citation>
    <scope>NUCLEOTIDE SEQUENCE [LARGE SCALE GENOMIC DNA]</scope>
    <source>
        <strain>DSM 17950 / CFBP 7177 / CIP 109463 / NCPPB 4357 / Et1/99</strain>
    </source>
</reference>
<feature type="chain" id="PRO_1000098883" description="Inner membrane-spanning protein YciB">
    <location>
        <begin position="1"/>
        <end position="178"/>
    </location>
</feature>
<feature type="transmembrane region" description="Helical" evidence="1">
    <location>
        <begin position="22"/>
        <end position="42"/>
    </location>
</feature>
<feature type="transmembrane region" description="Helical" evidence="1">
    <location>
        <begin position="50"/>
        <end position="70"/>
    </location>
</feature>
<feature type="transmembrane region" description="Helical" evidence="1">
    <location>
        <begin position="76"/>
        <end position="96"/>
    </location>
</feature>
<feature type="transmembrane region" description="Helical" evidence="1">
    <location>
        <begin position="121"/>
        <end position="141"/>
    </location>
</feature>
<feature type="transmembrane region" description="Helical" evidence="1">
    <location>
        <begin position="149"/>
        <end position="169"/>
    </location>
</feature>
<proteinExistence type="inferred from homology"/>
<comment type="function">
    <text evidence="1">Plays a role in cell envelope biogenesis, maintenance of cell envelope integrity and membrane homeostasis.</text>
</comment>
<comment type="subcellular location">
    <subcellularLocation>
        <location evidence="1">Cell inner membrane</location>
        <topology evidence="1">Multi-pass membrane protein</topology>
    </subcellularLocation>
</comment>
<comment type="similarity">
    <text evidence="1">Belongs to the YciB family.</text>
</comment>
<evidence type="ECO:0000255" key="1">
    <source>
        <dbReference type="HAMAP-Rule" id="MF_00189"/>
    </source>
</evidence>
<name>YCIB_ERWT9</name>
<gene>
    <name evidence="1" type="primary">yciB</name>
    <name type="ordered locus">ETA_15950</name>
</gene>
<accession>B2VKV9</accession>